<reference key="1">
    <citation type="journal article" date="2006" name="Proc. Natl. Acad. Sci. U.S.A.">
        <title>Comparative genomics of the lactic acid bacteria.</title>
        <authorList>
            <person name="Makarova K.S."/>
            <person name="Slesarev A."/>
            <person name="Wolf Y.I."/>
            <person name="Sorokin A."/>
            <person name="Mirkin B."/>
            <person name="Koonin E.V."/>
            <person name="Pavlov A."/>
            <person name="Pavlova N."/>
            <person name="Karamychev V."/>
            <person name="Polouchine N."/>
            <person name="Shakhova V."/>
            <person name="Grigoriev I."/>
            <person name="Lou Y."/>
            <person name="Rohksar D."/>
            <person name="Lucas S."/>
            <person name="Huang K."/>
            <person name="Goodstein D.M."/>
            <person name="Hawkins T."/>
            <person name="Plengvidhya V."/>
            <person name="Welker D."/>
            <person name="Hughes J."/>
            <person name="Goh Y."/>
            <person name="Benson A."/>
            <person name="Baldwin K."/>
            <person name="Lee J.-H."/>
            <person name="Diaz-Muniz I."/>
            <person name="Dosti B."/>
            <person name="Smeianov V."/>
            <person name="Wechter W."/>
            <person name="Barabote R."/>
            <person name="Lorca G."/>
            <person name="Altermann E."/>
            <person name="Barrangou R."/>
            <person name="Ganesan B."/>
            <person name="Xie Y."/>
            <person name="Rawsthorne H."/>
            <person name="Tamir D."/>
            <person name="Parker C."/>
            <person name="Breidt F."/>
            <person name="Broadbent J.R."/>
            <person name="Hutkins R."/>
            <person name="O'Sullivan D."/>
            <person name="Steele J."/>
            <person name="Unlu G."/>
            <person name="Saier M.H. Jr."/>
            <person name="Klaenhammer T."/>
            <person name="Richardson P."/>
            <person name="Kozyavkin S."/>
            <person name="Weimer B.C."/>
            <person name="Mills D.A."/>
        </authorList>
    </citation>
    <scope>NUCLEOTIDE SEQUENCE [LARGE SCALE GENOMIC DNA]</scope>
    <source>
        <strain>SK11</strain>
    </source>
</reference>
<sequence>MKIDGYTRMAAVVANPIKHSLSPFIHNLAFDLTDENGVYLAWEVESKKLAAIVENVRNLDMYGLNISMPYKGEIIKFMDELSPAAELIGAVNTVVNHSGKIIGHNTDGIGFFNSLKKYDFKIENKQMLVLGGGGAAIALIAQAALSGAKKIVVAARKSASYDPLNEKLAKLSAKTGVEIFLTDLSGADRLQKELNQTDLLVNATSVGMDGASFPLEKSLLLPDRLLVVDAIYKVRETPFLRWAKEQGAQTENGLGMLIGQAAESFYLWTGKEMPVDKITLEMEREV</sequence>
<keyword id="KW-0028">Amino-acid biosynthesis</keyword>
<keyword id="KW-0057">Aromatic amino acid biosynthesis</keyword>
<keyword id="KW-0521">NADP</keyword>
<keyword id="KW-0560">Oxidoreductase</keyword>
<protein>
    <recommendedName>
        <fullName evidence="1">Shikimate dehydrogenase (NADP(+))</fullName>
        <shortName evidence="1">SDH</shortName>
        <ecNumber evidence="1">1.1.1.25</ecNumber>
    </recommendedName>
</protein>
<proteinExistence type="inferred from homology"/>
<dbReference type="EC" id="1.1.1.25" evidence="1"/>
<dbReference type="EMBL" id="CP000425">
    <property type="protein sequence ID" value="ABJ73405.1"/>
    <property type="molecule type" value="Genomic_DNA"/>
</dbReference>
<dbReference type="RefSeq" id="WP_011676753.1">
    <property type="nucleotide sequence ID" value="NC_008527.1"/>
</dbReference>
<dbReference type="SMR" id="Q02XB7"/>
<dbReference type="KEGG" id="llc:LACR_1921"/>
<dbReference type="HOGENOM" id="CLU_044063_4_1_9"/>
<dbReference type="UniPathway" id="UPA00053">
    <property type="reaction ID" value="UER00087"/>
</dbReference>
<dbReference type="Proteomes" id="UP000000240">
    <property type="component" value="Chromosome"/>
</dbReference>
<dbReference type="GO" id="GO:0050661">
    <property type="term" value="F:NADP binding"/>
    <property type="evidence" value="ECO:0007669"/>
    <property type="project" value="InterPro"/>
</dbReference>
<dbReference type="GO" id="GO:0004764">
    <property type="term" value="F:shikimate 3-dehydrogenase (NADP+) activity"/>
    <property type="evidence" value="ECO:0007669"/>
    <property type="project" value="UniProtKB-UniRule"/>
</dbReference>
<dbReference type="GO" id="GO:0008652">
    <property type="term" value="P:amino acid biosynthetic process"/>
    <property type="evidence" value="ECO:0007669"/>
    <property type="project" value="UniProtKB-KW"/>
</dbReference>
<dbReference type="GO" id="GO:0009073">
    <property type="term" value="P:aromatic amino acid family biosynthetic process"/>
    <property type="evidence" value="ECO:0007669"/>
    <property type="project" value="UniProtKB-KW"/>
</dbReference>
<dbReference type="GO" id="GO:0009423">
    <property type="term" value="P:chorismate biosynthetic process"/>
    <property type="evidence" value="ECO:0007669"/>
    <property type="project" value="UniProtKB-UniRule"/>
</dbReference>
<dbReference type="GO" id="GO:0019632">
    <property type="term" value="P:shikimate metabolic process"/>
    <property type="evidence" value="ECO:0007669"/>
    <property type="project" value="InterPro"/>
</dbReference>
<dbReference type="CDD" id="cd01065">
    <property type="entry name" value="NAD_bind_Shikimate_DH"/>
    <property type="match status" value="1"/>
</dbReference>
<dbReference type="Gene3D" id="3.40.50.10860">
    <property type="entry name" value="Leucine Dehydrogenase, chain A, domain 1"/>
    <property type="match status" value="1"/>
</dbReference>
<dbReference type="Gene3D" id="3.40.50.720">
    <property type="entry name" value="NAD(P)-binding Rossmann-like Domain"/>
    <property type="match status" value="1"/>
</dbReference>
<dbReference type="HAMAP" id="MF_00222">
    <property type="entry name" value="Shikimate_DH_AroE"/>
    <property type="match status" value="1"/>
</dbReference>
<dbReference type="InterPro" id="IPR046346">
    <property type="entry name" value="Aminoacid_DH-like_N_sf"/>
</dbReference>
<dbReference type="InterPro" id="IPR036291">
    <property type="entry name" value="NAD(P)-bd_dom_sf"/>
</dbReference>
<dbReference type="InterPro" id="IPR041121">
    <property type="entry name" value="SDH_C"/>
</dbReference>
<dbReference type="InterPro" id="IPR011342">
    <property type="entry name" value="Shikimate_DH"/>
</dbReference>
<dbReference type="InterPro" id="IPR013708">
    <property type="entry name" value="Shikimate_DH-bd_N"/>
</dbReference>
<dbReference type="InterPro" id="IPR022893">
    <property type="entry name" value="Shikimate_DH_fam"/>
</dbReference>
<dbReference type="NCBIfam" id="TIGR00507">
    <property type="entry name" value="aroE"/>
    <property type="match status" value="1"/>
</dbReference>
<dbReference type="NCBIfam" id="NF001315">
    <property type="entry name" value="PRK00258.2-4"/>
    <property type="match status" value="1"/>
</dbReference>
<dbReference type="PANTHER" id="PTHR21089:SF1">
    <property type="entry name" value="BIFUNCTIONAL 3-DEHYDROQUINATE DEHYDRATASE_SHIKIMATE DEHYDROGENASE, CHLOROPLASTIC"/>
    <property type="match status" value="1"/>
</dbReference>
<dbReference type="PANTHER" id="PTHR21089">
    <property type="entry name" value="SHIKIMATE DEHYDROGENASE"/>
    <property type="match status" value="1"/>
</dbReference>
<dbReference type="Pfam" id="PF18317">
    <property type="entry name" value="SDH_C"/>
    <property type="match status" value="1"/>
</dbReference>
<dbReference type="Pfam" id="PF08501">
    <property type="entry name" value="Shikimate_dh_N"/>
    <property type="match status" value="1"/>
</dbReference>
<dbReference type="SUPFAM" id="SSF53223">
    <property type="entry name" value="Aminoacid dehydrogenase-like, N-terminal domain"/>
    <property type="match status" value="1"/>
</dbReference>
<dbReference type="SUPFAM" id="SSF51735">
    <property type="entry name" value="NAD(P)-binding Rossmann-fold domains"/>
    <property type="match status" value="1"/>
</dbReference>
<evidence type="ECO:0000255" key="1">
    <source>
        <dbReference type="HAMAP-Rule" id="MF_00222"/>
    </source>
</evidence>
<feature type="chain" id="PRO_1000021293" description="Shikimate dehydrogenase (NADP(+))">
    <location>
        <begin position="1"/>
        <end position="286"/>
    </location>
</feature>
<feature type="active site" description="Proton acceptor" evidence="1">
    <location>
        <position position="71"/>
    </location>
</feature>
<feature type="binding site" evidence="1">
    <location>
        <begin position="20"/>
        <end position="22"/>
    </location>
    <ligand>
        <name>shikimate</name>
        <dbReference type="ChEBI" id="CHEBI:36208"/>
    </ligand>
</feature>
<feature type="binding site" evidence="1">
    <location>
        <position position="67"/>
    </location>
    <ligand>
        <name>shikimate</name>
        <dbReference type="ChEBI" id="CHEBI:36208"/>
    </ligand>
</feature>
<feature type="binding site" evidence="1">
    <location>
        <position position="92"/>
    </location>
    <ligand>
        <name>shikimate</name>
        <dbReference type="ChEBI" id="CHEBI:36208"/>
    </ligand>
</feature>
<feature type="binding site" evidence="1">
    <location>
        <position position="107"/>
    </location>
    <ligand>
        <name>shikimate</name>
        <dbReference type="ChEBI" id="CHEBI:36208"/>
    </ligand>
</feature>
<feature type="binding site" evidence="1">
    <location>
        <begin position="131"/>
        <end position="135"/>
    </location>
    <ligand>
        <name>NADP(+)</name>
        <dbReference type="ChEBI" id="CHEBI:58349"/>
    </ligand>
</feature>
<feature type="binding site" evidence="1">
    <location>
        <position position="230"/>
    </location>
    <ligand>
        <name>NADP(+)</name>
        <dbReference type="ChEBI" id="CHEBI:58349"/>
    </ligand>
</feature>
<feature type="binding site" evidence="1">
    <location>
        <position position="232"/>
    </location>
    <ligand>
        <name>shikimate</name>
        <dbReference type="ChEBI" id="CHEBI:36208"/>
    </ligand>
</feature>
<feature type="binding site" evidence="1">
    <location>
        <position position="253"/>
    </location>
    <ligand>
        <name>NADP(+)</name>
        <dbReference type="ChEBI" id="CHEBI:58349"/>
    </ligand>
</feature>
<organism>
    <name type="scientific">Lactococcus lactis subsp. cremoris (strain SK11)</name>
    <dbReference type="NCBI Taxonomy" id="272622"/>
    <lineage>
        <taxon>Bacteria</taxon>
        <taxon>Bacillati</taxon>
        <taxon>Bacillota</taxon>
        <taxon>Bacilli</taxon>
        <taxon>Lactobacillales</taxon>
        <taxon>Streptococcaceae</taxon>
        <taxon>Lactococcus</taxon>
        <taxon>Lactococcus cremoris subsp. cremoris</taxon>
    </lineage>
</organism>
<comment type="function">
    <text evidence="1">Involved in the biosynthesis of the chorismate, which leads to the biosynthesis of aromatic amino acids. Catalyzes the reversible NADPH linked reduction of 3-dehydroshikimate (DHSA) to yield shikimate (SA).</text>
</comment>
<comment type="catalytic activity">
    <reaction evidence="1">
        <text>shikimate + NADP(+) = 3-dehydroshikimate + NADPH + H(+)</text>
        <dbReference type="Rhea" id="RHEA:17737"/>
        <dbReference type="ChEBI" id="CHEBI:15378"/>
        <dbReference type="ChEBI" id="CHEBI:16630"/>
        <dbReference type="ChEBI" id="CHEBI:36208"/>
        <dbReference type="ChEBI" id="CHEBI:57783"/>
        <dbReference type="ChEBI" id="CHEBI:58349"/>
        <dbReference type="EC" id="1.1.1.25"/>
    </reaction>
</comment>
<comment type="pathway">
    <text evidence="1">Metabolic intermediate biosynthesis; chorismate biosynthesis; chorismate from D-erythrose 4-phosphate and phosphoenolpyruvate: step 4/7.</text>
</comment>
<comment type="subunit">
    <text evidence="1">Homodimer.</text>
</comment>
<comment type="similarity">
    <text evidence="1">Belongs to the shikimate dehydrogenase family.</text>
</comment>
<accession>Q02XB7</accession>
<name>AROE_LACLS</name>
<gene>
    <name evidence="1" type="primary">aroE</name>
    <name type="ordered locus">LACR_1921</name>
</gene>